<reference key="1">
    <citation type="journal article" date="2002" name="Proc. Natl. Acad. Sci. U.S.A.">
        <title>The genome sequence of Bifidobacterium longum reflects its adaptation to the human gastrointestinal tract.</title>
        <authorList>
            <person name="Schell M.A."/>
            <person name="Karmirantzou M."/>
            <person name="Snel B."/>
            <person name="Vilanova D."/>
            <person name="Berger B."/>
            <person name="Pessi G."/>
            <person name="Zwahlen M.-C."/>
            <person name="Desiere F."/>
            <person name="Bork P."/>
            <person name="Delley M."/>
            <person name="Pridmore R.D."/>
            <person name="Arigoni F."/>
        </authorList>
    </citation>
    <scope>NUCLEOTIDE SEQUENCE [LARGE SCALE GENOMIC DNA]</scope>
    <source>
        <strain>NCC 2705</strain>
    </source>
</reference>
<accession>Q8CY49</accession>
<keyword id="KW-0067">ATP-binding</keyword>
<keyword id="KW-0460">Magnesium</keyword>
<keyword id="KW-0547">Nucleotide-binding</keyword>
<keyword id="KW-1185">Reference proteome</keyword>
<keyword id="KW-0808">Transferase</keyword>
<keyword id="KW-0819">tRNA processing</keyword>
<dbReference type="EC" id="2.5.1.75" evidence="1"/>
<dbReference type="EMBL" id="AE014295">
    <property type="protein sequence ID" value="AAN25208.1"/>
    <property type="molecule type" value="Genomic_DNA"/>
</dbReference>
<dbReference type="RefSeq" id="NP_696572.1">
    <property type="nucleotide sequence ID" value="NC_004307.2"/>
</dbReference>
<dbReference type="RefSeq" id="WP_007052636.1">
    <property type="nucleotide sequence ID" value="NC_004307.2"/>
</dbReference>
<dbReference type="SMR" id="Q8CY49"/>
<dbReference type="STRING" id="206672.BL1409"/>
<dbReference type="EnsemblBacteria" id="AAN25208">
    <property type="protein sequence ID" value="AAN25208"/>
    <property type="gene ID" value="BL1409"/>
</dbReference>
<dbReference type="GeneID" id="69578416"/>
<dbReference type="KEGG" id="blo:BL1409"/>
<dbReference type="PATRIC" id="fig|206672.9.peg.267"/>
<dbReference type="HOGENOM" id="CLU_032616_0_1_11"/>
<dbReference type="OrthoDB" id="9776390at2"/>
<dbReference type="PhylomeDB" id="Q8CY49"/>
<dbReference type="Proteomes" id="UP000000439">
    <property type="component" value="Chromosome"/>
</dbReference>
<dbReference type="GO" id="GO:0005524">
    <property type="term" value="F:ATP binding"/>
    <property type="evidence" value="ECO:0007669"/>
    <property type="project" value="UniProtKB-UniRule"/>
</dbReference>
<dbReference type="GO" id="GO:0052381">
    <property type="term" value="F:tRNA dimethylallyltransferase activity"/>
    <property type="evidence" value="ECO:0007669"/>
    <property type="project" value="UniProtKB-UniRule"/>
</dbReference>
<dbReference type="GO" id="GO:0006400">
    <property type="term" value="P:tRNA modification"/>
    <property type="evidence" value="ECO:0007669"/>
    <property type="project" value="TreeGrafter"/>
</dbReference>
<dbReference type="FunFam" id="1.10.20.140:FF:000001">
    <property type="entry name" value="tRNA dimethylallyltransferase"/>
    <property type="match status" value="1"/>
</dbReference>
<dbReference type="Gene3D" id="1.10.20.140">
    <property type="match status" value="1"/>
</dbReference>
<dbReference type="Gene3D" id="3.40.50.300">
    <property type="entry name" value="P-loop containing nucleotide triphosphate hydrolases"/>
    <property type="match status" value="1"/>
</dbReference>
<dbReference type="HAMAP" id="MF_00185">
    <property type="entry name" value="IPP_trans"/>
    <property type="match status" value="1"/>
</dbReference>
<dbReference type="InterPro" id="IPR039657">
    <property type="entry name" value="Dimethylallyltransferase"/>
</dbReference>
<dbReference type="InterPro" id="IPR018022">
    <property type="entry name" value="IPT"/>
</dbReference>
<dbReference type="InterPro" id="IPR027417">
    <property type="entry name" value="P-loop_NTPase"/>
</dbReference>
<dbReference type="NCBIfam" id="TIGR00174">
    <property type="entry name" value="miaA"/>
    <property type="match status" value="1"/>
</dbReference>
<dbReference type="PANTHER" id="PTHR11088">
    <property type="entry name" value="TRNA DIMETHYLALLYLTRANSFERASE"/>
    <property type="match status" value="1"/>
</dbReference>
<dbReference type="PANTHER" id="PTHR11088:SF60">
    <property type="entry name" value="TRNA DIMETHYLALLYLTRANSFERASE"/>
    <property type="match status" value="1"/>
</dbReference>
<dbReference type="Pfam" id="PF01715">
    <property type="entry name" value="IPPT"/>
    <property type="match status" value="1"/>
</dbReference>
<dbReference type="SUPFAM" id="SSF52540">
    <property type="entry name" value="P-loop containing nucleoside triphosphate hydrolases"/>
    <property type="match status" value="1"/>
</dbReference>
<organism>
    <name type="scientific">Bifidobacterium longum (strain NCC 2705)</name>
    <dbReference type="NCBI Taxonomy" id="206672"/>
    <lineage>
        <taxon>Bacteria</taxon>
        <taxon>Bacillati</taxon>
        <taxon>Actinomycetota</taxon>
        <taxon>Actinomycetes</taxon>
        <taxon>Bifidobacteriales</taxon>
        <taxon>Bifidobacteriaceae</taxon>
        <taxon>Bifidobacterium</taxon>
    </lineage>
</organism>
<gene>
    <name evidence="1" type="primary">miaA</name>
    <name type="ordered locus">BL1409</name>
</gene>
<protein>
    <recommendedName>
        <fullName evidence="1">tRNA dimethylallyltransferase</fullName>
        <ecNumber evidence="1">2.5.1.75</ecNumber>
    </recommendedName>
    <alternativeName>
        <fullName evidence="1">Dimethylallyl diphosphate:tRNA dimethylallyltransferase</fullName>
        <shortName evidence="1">DMAPP:tRNA dimethylallyltransferase</shortName>
        <shortName evidence="1">DMATase</shortName>
    </alternativeName>
    <alternativeName>
        <fullName evidence="1">Isopentenyl-diphosphate:tRNA isopentenyltransferase</fullName>
        <shortName evidence="1">IPP transferase</shortName>
        <shortName evidence="1">IPPT</shortName>
        <shortName evidence="1">IPTase</shortName>
    </alternativeName>
</protein>
<comment type="function">
    <text evidence="1">Catalyzes the transfer of a dimethylallyl group onto the adenine at position 37 in tRNAs that read codons beginning with uridine, leading to the formation of N6-(dimethylallyl)adenosine (i(6)A).</text>
</comment>
<comment type="catalytic activity">
    <reaction evidence="1">
        <text>adenosine(37) in tRNA + dimethylallyl diphosphate = N(6)-dimethylallyladenosine(37) in tRNA + diphosphate</text>
        <dbReference type="Rhea" id="RHEA:26482"/>
        <dbReference type="Rhea" id="RHEA-COMP:10162"/>
        <dbReference type="Rhea" id="RHEA-COMP:10375"/>
        <dbReference type="ChEBI" id="CHEBI:33019"/>
        <dbReference type="ChEBI" id="CHEBI:57623"/>
        <dbReference type="ChEBI" id="CHEBI:74411"/>
        <dbReference type="ChEBI" id="CHEBI:74415"/>
        <dbReference type="EC" id="2.5.1.75"/>
    </reaction>
</comment>
<comment type="cofactor">
    <cofactor evidence="1">
        <name>Mg(2+)</name>
        <dbReference type="ChEBI" id="CHEBI:18420"/>
    </cofactor>
</comment>
<comment type="subunit">
    <text evidence="1">Monomer.</text>
</comment>
<comment type="similarity">
    <text evidence="1">Belongs to the IPP transferase family.</text>
</comment>
<name>MIAA_BIFLO</name>
<sequence length="328" mass="36463">MTQRVVSIVGPTASGKTGLGIAIARRLAEAGERAEIVNADAYQMYRGMDIGTAKPTAEEQAAVPHHLIDIIDPEDTMSVARFQQLARETIADLQSRGIRPILVGGSGLYARAAIDDITFPGTDPDVRTRLEEREKTEGAGALFDELRAKDPEAAARMDPRNPRRTIRALEVIELTGKPYSASLPRYRYVIPSVQIGLDLDRPDLDHRIDLRTKQMYDDGFIEEVERLRPHLGATAVRALGYQQIIDLLDGIWDVNDAFADIAQKTKRLARKQMGWFGRDPRIHWLQALNPKLVDNAMAIIAHADAGDYDPIDARADEYTQHHLGDITA</sequence>
<proteinExistence type="inferred from homology"/>
<feature type="chain" id="PRO_0000163881" description="tRNA dimethylallyltransferase">
    <location>
        <begin position="1"/>
        <end position="328"/>
    </location>
</feature>
<feature type="binding site" evidence="1">
    <location>
        <begin position="10"/>
        <end position="17"/>
    </location>
    <ligand>
        <name>ATP</name>
        <dbReference type="ChEBI" id="CHEBI:30616"/>
    </ligand>
</feature>
<feature type="binding site" evidence="1">
    <location>
        <begin position="12"/>
        <end position="17"/>
    </location>
    <ligand>
        <name>substrate</name>
    </ligand>
</feature>
<feature type="site" description="Interaction with substrate tRNA" evidence="1">
    <location>
        <position position="106"/>
    </location>
</feature>
<feature type="site" description="Interaction with substrate tRNA" evidence="1">
    <location>
        <position position="127"/>
    </location>
</feature>
<evidence type="ECO:0000255" key="1">
    <source>
        <dbReference type="HAMAP-Rule" id="MF_00185"/>
    </source>
</evidence>